<reference key="1">
    <citation type="journal article" date="2005" name="BMC Genomics">
        <title>Bacterial genome adaptation to niches: divergence of the potential virulence genes in three Burkholderia species of different survival strategies.</title>
        <authorList>
            <person name="Kim H.S."/>
            <person name="Schell M.A."/>
            <person name="Yu Y."/>
            <person name="Ulrich R.L."/>
            <person name="Sarria S.H."/>
            <person name="Nierman W.C."/>
            <person name="DeShazer D."/>
        </authorList>
    </citation>
    <scope>NUCLEOTIDE SEQUENCE [LARGE SCALE GENOMIC DNA]</scope>
    <source>
        <strain>ATCC 700388 / DSM 13276 / CCUG 48851 / CIP 106301 / E264</strain>
    </source>
</reference>
<sequence>MIALIQRVKRADVRVGERVTGEIGPGLLALVCAERGDTEAAADKLLAKVLGYRVFSDAAGKMNLPVSNLDGAGRAGGLLLVSQFTLAADTNSGLRPSFTPAAPPDEGERLFDYFVRRARERHPIVATGEFGADMQVSLVNDGPVTFWLQTRA</sequence>
<name>DTD_BURTA</name>
<organism>
    <name type="scientific">Burkholderia thailandensis (strain ATCC 700388 / DSM 13276 / CCUG 48851 / CIP 106301 / E264)</name>
    <dbReference type="NCBI Taxonomy" id="271848"/>
    <lineage>
        <taxon>Bacteria</taxon>
        <taxon>Pseudomonadati</taxon>
        <taxon>Pseudomonadota</taxon>
        <taxon>Betaproteobacteria</taxon>
        <taxon>Burkholderiales</taxon>
        <taxon>Burkholderiaceae</taxon>
        <taxon>Burkholderia</taxon>
        <taxon>pseudomallei group</taxon>
    </lineage>
</organism>
<comment type="function">
    <text evidence="1">An aminoacyl-tRNA editing enzyme that deacylates mischarged D-aminoacyl-tRNAs. Also deacylates mischarged glycyl-tRNA(Ala), protecting cells against glycine mischarging by AlaRS. Acts via tRNA-based rather than protein-based catalysis; rejects L-amino acids rather than detecting D-amino acids in the active site. By recycling D-aminoacyl-tRNA to D-amino acids and free tRNA molecules, this enzyme counteracts the toxicity associated with the formation of D-aminoacyl-tRNA entities in vivo and helps enforce protein L-homochirality.</text>
</comment>
<comment type="catalytic activity">
    <reaction evidence="1">
        <text>glycyl-tRNA(Ala) + H2O = tRNA(Ala) + glycine + H(+)</text>
        <dbReference type="Rhea" id="RHEA:53744"/>
        <dbReference type="Rhea" id="RHEA-COMP:9657"/>
        <dbReference type="Rhea" id="RHEA-COMP:13640"/>
        <dbReference type="ChEBI" id="CHEBI:15377"/>
        <dbReference type="ChEBI" id="CHEBI:15378"/>
        <dbReference type="ChEBI" id="CHEBI:57305"/>
        <dbReference type="ChEBI" id="CHEBI:78442"/>
        <dbReference type="ChEBI" id="CHEBI:78522"/>
        <dbReference type="EC" id="3.1.1.96"/>
    </reaction>
</comment>
<comment type="catalytic activity">
    <reaction evidence="1">
        <text>a D-aminoacyl-tRNA + H2O = a tRNA + a D-alpha-amino acid + H(+)</text>
        <dbReference type="Rhea" id="RHEA:13953"/>
        <dbReference type="Rhea" id="RHEA-COMP:10123"/>
        <dbReference type="Rhea" id="RHEA-COMP:10124"/>
        <dbReference type="ChEBI" id="CHEBI:15377"/>
        <dbReference type="ChEBI" id="CHEBI:15378"/>
        <dbReference type="ChEBI" id="CHEBI:59871"/>
        <dbReference type="ChEBI" id="CHEBI:78442"/>
        <dbReference type="ChEBI" id="CHEBI:79333"/>
        <dbReference type="EC" id="3.1.1.96"/>
    </reaction>
</comment>
<comment type="subunit">
    <text evidence="1">Homodimer.</text>
</comment>
<comment type="subcellular location">
    <subcellularLocation>
        <location evidence="1">Cytoplasm</location>
    </subcellularLocation>
</comment>
<comment type="domain">
    <text evidence="1">A Gly-cisPro motif from one monomer fits into the active site of the other monomer to allow specific chiral rejection of L-amino acids.</text>
</comment>
<comment type="similarity">
    <text evidence="1">Belongs to the DTD family.</text>
</comment>
<feature type="chain" id="PRO_0000259267" description="D-aminoacyl-tRNA deacylase">
    <location>
        <begin position="1"/>
        <end position="152"/>
    </location>
</feature>
<feature type="short sequence motif" description="Gly-cisPro motif, important for rejection of L-amino acids" evidence="1">
    <location>
        <begin position="142"/>
        <end position="143"/>
    </location>
</feature>
<keyword id="KW-0963">Cytoplasm</keyword>
<keyword id="KW-0378">Hydrolase</keyword>
<keyword id="KW-0694">RNA-binding</keyword>
<keyword id="KW-0820">tRNA-binding</keyword>
<gene>
    <name evidence="1" type="primary">dtd</name>
    <name type="ordered locus">BTH_I1242</name>
</gene>
<protein>
    <recommendedName>
        <fullName evidence="1">D-aminoacyl-tRNA deacylase</fullName>
        <shortName evidence="1">DTD</shortName>
        <ecNumber evidence="1">3.1.1.96</ecNumber>
    </recommendedName>
    <alternativeName>
        <fullName evidence="1">Gly-tRNA(Ala) deacylase</fullName>
    </alternativeName>
</protein>
<accession>Q2SZ60</accession>
<proteinExistence type="inferred from homology"/>
<dbReference type="EC" id="3.1.1.96" evidence="1"/>
<dbReference type="EMBL" id="CP000086">
    <property type="protein sequence ID" value="ABC39312.1"/>
    <property type="molecule type" value="Genomic_DNA"/>
</dbReference>
<dbReference type="RefSeq" id="WP_004200499.1">
    <property type="nucleotide sequence ID" value="NZ_CP008785.1"/>
</dbReference>
<dbReference type="SMR" id="Q2SZ60"/>
<dbReference type="GeneID" id="93061498"/>
<dbReference type="KEGG" id="bte:BTH_I1242"/>
<dbReference type="HOGENOM" id="CLU_076901_1_1_4"/>
<dbReference type="Proteomes" id="UP000001930">
    <property type="component" value="Chromosome I"/>
</dbReference>
<dbReference type="GO" id="GO:0005737">
    <property type="term" value="C:cytoplasm"/>
    <property type="evidence" value="ECO:0007669"/>
    <property type="project" value="UniProtKB-SubCell"/>
</dbReference>
<dbReference type="GO" id="GO:0051500">
    <property type="term" value="F:D-tyrosyl-tRNA(Tyr) deacylase activity"/>
    <property type="evidence" value="ECO:0007669"/>
    <property type="project" value="TreeGrafter"/>
</dbReference>
<dbReference type="GO" id="GO:0106026">
    <property type="term" value="F:Gly-tRNA(Ala) deacylase activity"/>
    <property type="evidence" value="ECO:0007669"/>
    <property type="project" value="UniProtKB-UniRule"/>
</dbReference>
<dbReference type="GO" id="GO:0043908">
    <property type="term" value="F:Ser(Gly)-tRNA(Ala) hydrolase activity"/>
    <property type="evidence" value="ECO:0007669"/>
    <property type="project" value="UniProtKB-UniRule"/>
</dbReference>
<dbReference type="GO" id="GO:0000049">
    <property type="term" value="F:tRNA binding"/>
    <property type="evidence" value="ECO:0007669"/>
    <property type="project" value="UniProtKB-UniRule"/>
</dbReference>
<dbReference type="GO" id="GO:0019478">
    <property type="term" value="P:D-amino acid catabolic process"/>
    <property type="evidence" value="ECO:0007669"/>
    <property type="project" value="UniProtKB-UniRule"/>
</dbReference>
<dbReference type="CDD" id="cd00563">
    <property type="entry name" value="Dtyr_deacylase"/>
    <property type="match status" value="1"/>
</dbReference>
<dbReference type="FunFam" id="3.50.80.10:FF:000001">
    <property type="entry name" value="D-aminoacyl-tRNA deacylase"/>
    <property type="match status" value="1"/>
</dbReference>
<dbReference type="Gene3D" id="3.50.80.10">
    <property type="entry name" value="D-tyrosyl-tRNA(Tyr) deacylase"/>
    <property type="match status" value="1"/>
</dbReference>
<dbReference type="HAMAP" id="MF_00518">
    <property type="entry name" value="Deacylase_Dtd"/>
    <property type="match status" value="1"/>
</dbReference>
<dbReference type="InterPro" id="IPR003732">
    <property type="entry name" value="Daa-tRNA_deacyls_DTD"/>
</dbReference>
<dbReference type="InterPro" id="IPR023509">
    <property type="entry name" value="DTD-like_sf"/>
</dbReference>
<dbReference type="NCBIfam" id="TIGR00256">
    <property type="entry name" value="D-aminoacyl-tRNA deacylase"/>
    <property type="match status" value="1"/>
</dbReference>
<dbReference type="PANTHER" id="PTHR10472:SF5">
    <property type="entry name" value="D-AMINOACYL-TRNA DEACYLASE 1"/>
    <property type="match status" value="1"/>
</dbReference>
<dbReference type="PANTHER" id="PTHR10472">
    <property type="entry name" value="D-TYROSYL-TRNA TYR DEACYLASE"/>
    <property type="match status" value="1"/>
</dbReference>
<dbReference type="Pfam" id="PF02580">
    <property type="entry name" value="Tyr_Deacylase"/>
    <property type="match status" value="1"/>
</dbReference>
<dbReference type="SUPFAM" id="SSF69500">
    <property type="entry name" value="DTD-like"/>
    <property type="match status" value="1"/>
</dbReference>
<evidence type="ECO:0000255" key="1">
    <source>
        <dbReference type="HAMAP-Rule" id="MF_00518"/>
    </source>
</evidence>